<feature type="chain" id="PRO_1000197374" description="Undecaprenyl-diphosphatase">
    <location>
        <begin position="1"/>
        <end position="272"/>
    </location>
</feature>
<feature type="transmembrane region" description="Helical" evidence="1">
    <location>
        <begin position="39"/>
        <end position="59"/>
    </location>
</feature>
<feature type="transmembrane region" description="Helical" evidence="1">
    <location>
        <begin position="87"/>
        <end position="107"/>
    </location>
</feature>
<feature type="transmembrane region" description="Helical" evidence="1">
    <location>
        <begin position="113"/>
        <end position="133"/>
    </location>
</feature>
<feature type="transmembrane region" description="Helical" evidence="1">
    <location>
        <begin position="145"/>
        <end position="165"/>
    </location>
</feature>
<feature type="transmembrane region" description="Helical" evidence="1">
    <location>
        <begin position="188"/>
        <end position="208"/>
    </location>
</feature>
<feature type="transmembrane region" description="Helical" evidence="1">
    <location>
        <begin position="220"/>
        <end position="240"/>
    </location>
</feature>
<feature type="transmembrane region" description="Helical" evidence="1">
    <location>
        <begin position="251"/>
        <end position="271"/>
    </location>
</feature>
<sequence>MDLLHAALLGLIQGATEVLPISSSGHLILIPRLLGWPDSGLTFDVALHFGTFLAIFVYFRKDVVSLVQDGLTGFFQPEAPRRLRLPWMIVLASIPAAIAGKTLEQPIEELFRSSPLMIALMLILFGLGLGLTDRYGKKLHDVASITLGTAMLVGCFQCLALVPGVSRSGITITAGLLLGLARTDAARFSFLLSLPIVFGAALLKGLHLLKHGIEPGMAMPMLVGVAVSAVVGYISVAFLLKFVQSRTLWPFVWYRVAAGIGVMALLGVGLLS</sequence>
<reference key="1">
    <citation type="submission" date="2008-05" db="EMBL/GenBank/DDBJ databases">
        <title>Complete sequence of chromosome of Geobacter lovleyi SZ.</title>
        <authorList>
            <consortium name="US DOE Joint Genome Institute"/>
            <person name="Lucas S."/>
            <person name="Copeland A."/>
            <person name="Lapidus A."/>
            <person name="Glavina del Rio T."/>
            <person name="Dalin E."/>
            <person name="Tice H."/>
            <person name="Bruce D."/>
            <person name="Goodwin L."/>
            <person name="Pitluck S."/>
            <person name="Chertkov O."/>
            <person name="Meincke L."/>
            <person name="Brettin T."/>
            <person name="Detter J.C."/>
            <person name="Han C."/>
            <person name="Tapia R."/>
            <person name="Kuske C.R."/>
            <person name="Schmutz J."/>
            <person name="Larimer F."/>
            <person name="Land M."/>
            <person name="Hauser L."/>
            <person name="Kyrpides N."/>
            <person name="Mikhailova N."/>
            <person name="Sung Y."/>
            <person name="Fletcher K.E."/>
            <person name="Ritalahti K.M."/>
            <person name="Loeffler F.E."/>
            <person name="Richardson P."/>
        </authorList>
    </citation>
    <scope>NUCLEOTIDE SEQUENCE [LARGE SCALE GENOMIC DNA]</scope>
    <source>
        <strain>ATCC BAA-1151 / DSM 17278 / SZ</strain>
    </source>
</reference>
<proteinExistence type="inferred from homology"/>
<accession>B3E340</accession>
<keyword id="KW-0046">Antibiotic resistance</keyword>
<keyword id="KW-0997">Cell inner membrane</keyword>
<keyword id="KW-1003">Cell membrane</keyword>
<keyword id="KW-0133">Cell shape</keyword>
<keyword id="KW-0961">Cell wall biogenesis/degradation</keyword>
<keyword id="KW-0378">Hydrolase</keyword>
<keyword id="KW-0472">Membrane</keyword>
<keyword id="KW-0573">Peptidoglycan synthesis</keyword>
<keyword id="KW-1185">Reference proteome</keyword>
<keyword id="KW-0812">Transmembrane</keyword>
<keyword id="KW-1133">Transmembrane helix</keyword>
<dbReference type="EC" id="3.6.1.27" evidence="1"/>
<dbReference type="EMBL" id="CP001089">
    <property type="protein sequence ID" value="ACD94252.1"/>
    <property type="molecule type" value="Genomic_DNA"/>
</dbReference>
<dbReference type="RefSeq" id="WP_012468608.1">
    <property type="nucleotide sequence ID" value="NC_010814.1"/>
</dbReference>
<dbReference type="SMR" id="B3E340"/>
<dbReference type="STRING" id="398767.Glov_0524"/>
<dbReference type="KEGG" id="glo:Glov_0524"/>
<dbReference type="eggNOG" id="COG1968">
    <property type="taxonomic scope" value="Bacteria"/>
</dbReference>
<dbReference type="HOGENOM" id="CLU_060296_1_0_7"/>
<dbReference type="OrthoDB" id="9808289at2"/>
<dbReference type="Proteomes" id="UP000002420">
    <property type="component" value="Chromosome"/>
</dbReference>
<dbReference type="GO" id="GO:0005886">
    <property type="term" value="C:plasma membrane"/>
    <property type="evidence" value="ECO:0007669"/>
    <property type="project" value="UniProtKB-SubCell"/>
</dbReference>
<dbReference type="GO" id="GO:0050380">
    <property type="term" value="F:undecaprenyl-diphosphatase activity"/>
    <property type="evidence" value="ECO:0007669"/>
    <property type="project" value="UniProtKB-UniRule"/>
</dbReference>
<dbReference type="GO" id="GO:0071555">
    <property type="term" value="P:cell wall organization"/>
    <property type="evidence" value="ECO:0007669"/>
    <property type="project" value="UniProtKB-KW"/>
</dbReference>
<dbReference type="GO" id="GO:0009252">
    <property type="term" value="P:peptidoglycan biosynthetic process"/>
    <property type="evidence" value="ECO:0007669"/>
    <property type="project" value="UniProtKB-KW"/>
</dbReference>
<dbReference type="GO" id="GO:0008360">
    <property type="term" value="P:regulation of cell shape"/>
    <property type="evidence" value="ECO:0007669"/>
    <property type="project" value="UniProtKB-KW"/>
</dbReference>
<dbReference type="GO" id="GO:0046677">
    <property type="term" value="P:response to antibiotic"/>
    <property type="evidence" value="ECO:0007669"/>
    <property type="project" value="UniProtKB-UniRule"/>
</dbReference>
<dbReference type="HAMAP" id="MF_01006">
    <property type="entry name" value="Undec_diphosphatase"/>
    <property type="match status" value="1"/>
</dbReference>
<dbReference type="InterPro" id="IPR003824">
    <property type="entry name" value="UppP"/>
</dbReference>
<dbReference type="NCBIfam" id="TIGR00753">
    <property type="entry name" value="undec_PP_bacA"/>
    <property type="match status" value="1"/>
</dbReference>
<dbReference type="PANTHER" id="PTHR30622">
    <property type="entry name" value="UNDECAPRENYL-DIPHOSPHATASE"/>
    <property type="match status" value="1"/>
</dbReference>
<dbReference type="PANTHER" id="PTHR30622:SF4">
    <property type="entry name" value="UNDECAPRENYL-DIPHOSPHATASE"/>
    <property type="match status" value="1"/>
</dbReference>
<dbReference type="Pfam" id="PF02673">
    <property type="entry name" value="BacA"/>
    <property type="match status" value="1"/>
</dbReference>
<name>UPPP_TRIL1</name>
<protein>
    <recommendedName>
        <fullName evidence="1">Undecaprenyl-diphosphatase</fullName>
        <ecNumber evidence="1">3.6.1.27</ecNumber>
    </recommendedName>
    <alternativeName>
        <fullName evidence="1">Bacitracin resistance protein</fullName>
    </alternativeName>
    <alternativeName>
        <fullName evidence="1">Undecaprenyl pyrophosphate phosphatase</fullName>
    </alternativeName>
</protein>
<comment type="function">
    <text evidence="1">Catalyzes the dephosphorylation of undecaprenyl diphosphate (UPP). Confers resistance to bacitracin.</text>
</comment>
<comment type="catalytic activity">
    <reaction evidence="1">
        <text>di-trans,octa-cis-undecaprenyl diphosphate + H2O = di-trans,octa-cis-undecaprenyl phosphate + phosphate + H(+)</text>
        <dbReference type="Rhea" id="RHEA:28094"/>
        <dbReference type="ChEBI" id="CHEBI:15377"/>
        <dbReference type="ChEBI" id="CHEBI:15378"/>
        <dbReference type="ChEBI" id="CHEBI:43474"/>
        <dbReference type="ChEBI" id="CHEBI:58405"/>
        <dbReference type="ChEBI" id="CHEBI:60392"/>
        <dbReference type="EC" id="3.6.1.27"/>
    </reaction>
</comment>
<comment type="subcellular location">
    <subcellularLocation>
        <location evidence="1">Cell inner membrane</location>
        <topology evidence="1">Multi-pass membrane protein</topology>
    </subcellularLocation>
</comment>
<comment type="miscellaneous">
    <text>Bacitracin is thought to be involved in the inhibition of peptidoglycan synthesis by sequestering undecaprenyl diphosphate, thereby reducing the pool of lipid carrier available.</text>
</comment>
<comment type="similarity">
    <text evidence="1">Belongs to the UppP family.</text>
</comment>
<gene>
    <name evidence="1" type="primary">uppP</name>
    <name type="ordered locus">Glov_0524</name>
</gene>
<organism>
    <name type="scientific">Trichlorobacter lovleyi (strain ATCC BAA-1151 / DSM 17278 / SZ)</name>
    <name type="common">Geobacter lovleyi</name>
    <dbReference type="NCBI Taxonomy" id="398767"/>
    <lineage>
        <taxon>Bacteria</taxon>
        <taxon>Pseudomonadati</taxon>
        <taxon>Thermodesulfobacteriota</taxon>
        <taxon>Desulfuromonadia</taxon>
        <taxon>Geobacterales</taxon>
        <taxon>Geobacteraceae</taxon>
        <taxon>Trichlorobacter</taxon>
    </lineage>
</organism>
<evidence type="ECO:0000255" key="1">
    <source>
        <dbReference type="HAMAP-Rule" id="MF_01006"/>
    </source>
</evidence>